<sequence>MTAEHFPVTELAKDLISRPSVTPLDEGCQTLMAERLSAIGFNIEPMIFEDTTNMWARRGNQGPVFCFAGHTDVVPTGDISRWHTPPFEPTIIDGYLYGRGAADMKGSLAAMIVATERFVTKHPDHQGSIAFLITSDEEGPFINGTTRVIDTLEARNEKITWALVGEPSSTLKLGDVVKNGRRGSLTGNLTIKGIQGHVAYPHLADNPIHKAAPFLAELSQMHWDNGNEFFPPTSMQIANIHGGTGASNVIPGALEVMFNFRYSTEVTAEILIERVEALLKAHELDYDISWIFNGLPFLTGEGPLLDATRYAIHQVTGYDTSPQTTGGTSDGRFIAPTGAKVLELGPVNATIHKVNECVKVDDLEQLALCYEVILEQLLC</sequence>
<reference key="1">
    <citation type="submission" date="2007-04" db="EMBL/GenBank/DDBJ databases">
        <title>Complete sequence of Shewanella putrefaciens CN-32.</title>
        <authorList>
            <consortium name="US DOE Joint Genome Institute"/>
            <person name="Copeland A."/>
            <person name="Lucas S."/>
            <person name="Lapidus A."/>
            <person name="Barry K."/>
            <person name="Detter J.C."/>
            <person name="Glavina del Rio T."/>
            <person name="Hammon N."/>
            <person name="Israni S."/>
            <person name="Dalin E."/>
            <person name="Tice H."/>
            <person name="Pitluck S."/>
            <person name="Chain P."/>
            <person name="Malfatti S."/>
            <person name="Shin M."/>
            <person name="Vergez L."/>
            <person name="Schmutz J."/>
            <person name="Larimer F."/>
            <person name="Land M."/>
            <person name="Hauser L."/>
            <person name="Kyrpides N."/>
            <person name="Mikhailova N."/>
            <person name="Romine M.F."/>
            <person name="Fredrickson J."/>
            <person name="Tiedje J."/>
            <person name="Richardson P."/>
        </authorList>
    </citation>
    <scope>NUCLEOTIDE SEQUENCE [LARGE SCALE GENOMIC DNA]</scope>
    <source>
        <strain>CN-32 / ATCC BAA-453</strain>
    </source>
</reference>
<comment type="function">
    <text evidence="1">Catalyzes the hydrolysis of N-succinyl-L,L-diaminopimelic acid (SDAP), forming succinate and LL-2,6-diaminopimelate (DAP), an intermediate involved in the bacterial biosynthesis of lysine and meso-diaminopimelic acid, an essential component of bacterial cell walls.</text>
</comment>
<comment type="catalytic activity">
    <reaction evidence="1">
        <text>N-succinyl-(2S,6S)-2,6-diaminopimelate + H2O = (2S,6S)-2,6-diaminopimelate + succinate</text>
        <dbReference type="Rhea" id="RHEA:22608"/>
        <dbReference type="ChEBI" id="CHEBI:15377"/>
        <dbReference type="ChEBI" id="CHEBI:30031"/>
        <dbReference type="ChEBI" id="CHEBI:57609"/>
        <dbReference type="ChEBI" id="CHEBI:58087"/>
        <dbReference type="EC" id="3.5.1.18"/>
    </reaction>
</comment>
<comment type="cofactor">
    <cofactor evidence="1">
        <name>Zn(2+)</name>
        <dbReference type="ChEBI" id="CHEBI:29105"/>
    </cofactor>
    <cofactor evidence="1">
        <name>Co(2+)</name>
        <dbReference type="ChEBI" id="CHEBI:48828"/>
    </cofactor>
    <text evidence="1">Binds 2 Zn(2+) or Co(2+) ions per subunit.</text>
</comment>
<comment type="pathway">
    <text evidence="1">Amino-acid biosynthesis; L-lysine biosynthesis via DAP pathway; LL-2,6-diaminopimelate from (S)-tetrahydrodipicolinate (succinylase route): step 3/3.</text>
</comment>
<comment type="subunit">
    <text evidence="1">Homodimer.</text>
</comment>
<comment type="similarity">
    <text evidence="1">Belongs to the peptidase M20A family. DapE subfamily.</text>
</comment>
<evidence type="ECO:0000255" key="1">
    <source>
        <dbReference type="HAMAP-Rule" id="MF_01690"/>
    </source>
</evidence>
<proteinExistence type="inferred from homology"/>
<dbReference type="EC" id="3.5.1.18" evidence="1"/>
<dbReference type="EMBL" id="CP000681">
    <property type="protein sequence ID" value="ABP75844.1"/>
    <property type="molecule type" value="Genomic_DNA"/>
</dbReference>
<dbReference type="SMR" id="A4Y7B1"/>
<dbReference type="STRING" id="319224.Sputcn32_2123"/>
<dbReference type="KEGG" id="spc:Sputcn32_2123"/>
<dbReference type="eggNOG" id="COG0624">
    <property type="taxonomic scope" value="Bacteria"/>
</dbReference>
<dbReference type="HOGENOM" id="CLU_021802_4_0_6"/>
<dbReference type="UniPathway" id="UPA00034">
    <property type="reaction ID" value="UER00021"/>
</dbReference>
<dbReference type="GO" id="GO:0008777">
    <property type="term" value="F:acetylornithine deacetylase activity"/>
    <property type="evidence" value="ECO:0007669"/>
    <property type="project" value="TreeGrafter"/>
</dbReference>
<dbReference type="GO" id="GO:0050897">
    <property type="term" value="F:cobalt ion binding"/>
    <property type="evidence" value="ECO:0007669"/>
    <property type="project" value="UniProtKB-UniRule"/>
</dbReference>
<dbReference type="GO" id="GO:0009014">
    <property type="term" value="F:succinyl-diaminopimelate desuccinylase activity"/>
    <property type="evidence" value="ECO:0007669"/>
    <property type="project" value="UniProtKB-UniRule"/>
</dbReference>
<dbReference type="GO" id="GO:0008270">
    <property type="term" value="F:zinc ion binding"/>
    <property type="evidence" value="ECO:0007669"/>
    <property type="project" value="UniProtKB-UniRule"/>
</dbReference>
<dbReference type="GO" id="GO:0019877">
    <property type="term" value="P:diaminopimelate biosynthetic process"/>
    <property type="evidence" value="ECO:0007669"/>
    <property type="project" value="UniProtKB-UniRule"/>
</dbReference>
<dbReference type="GO" id="GO:0006526">
    <property type="term" value="P:L-arginine biosynthetic process"/>
    <property type="evidence" value="ECO:0007669"/>
    <property type="project" value="TreeGrafter"/>
</dbReference>
<dbReference type="GO" id="GO:0009089">
    <property type="term" value="P:lysine biosynthetic process via diaminopimelate"/>
    <property type="evidence" value="ECO:0007669"/>
    <property type="project" value="UniProtKB-UniRule"/>
</dbReference>
<dbReference type="CDD" id="cd03891">
    <property type="entry name" value="M20_DapE_proteobac"/>
    <property type="match status" value="1"/>
</dbReference>
<dbReference type="FunFam" id="3.30.70.360:FF:000011">
    <property type="entry name" value="Succinyl-diaminopimelate desuccinylase"/>
    <property type="match status" value="1"/>
</dbReference>
<dbReference type="FunFam" id="3.40.630.10:FF:000005">
    <property type="entry name" value="Succinyl-diaminopimelate desuccinylase"/>
    <property type="match status" value="1"/>
</dbReference>
<dbReference type="Gene3D" id="3.40.630.10">
    <property type="entry name" value="Zn peptidases"/>
    <property type="match status" value="2"/>
</dbReference>
<dbReference type="HAMAP" id="MF_01690">
    <property type="entry name" value="DapE"/>
    <property type="match status" value="1"/>
</dbReference>
<dbReference type="InterPro" id="IPR001261">
    <property type="entry name" value="ArgE/DapE_CS"/>
</dbReference>
<dbReference type="InterPro" id="IPR036264">
    <property type="entry name" value="Bact_exopeptidase_dim_dom"/>
</dbReference>
<dbReference type="InterPro" id="IPR005941">
    <property type="entry name" value="DapE_proteobac"/>
</dbReference>
<dbReference type="InterPro" id="IPR002933">
    <property type="entry name" value="Peptidase_M20"/>
</dbReference>
<dbReference type="InterPro" id="IPR011650">
    <property type="entry name" value="Peptidase_M20_dimer"/>
</dbReference>
<dbReference type="InterPro" id="IPR050072">
    <property type="entry name" value="Peptidase_M20A"/>
</dbReference>
<dbReference type="NCBIfam" id="TIGR01246">
    <property type="entry name" value="dapE_proteo"/>
    <property type="match status" value="1"/>
</dbReference>
<dbReference type="NCBIfam" id="NF009557">
    <property type="entry name" value="PRK13009.1"/>
    <property type="match status" value="1"/>
</dbReference>
<dbReference type="PANTHER" id="PTHR43808">
    <property type="entry name" value="ACETYLORNITHINE DEACETYLASE"/>
    <property type="match status" value="1"/>
</dbReference>
<dbReference type="PANTHER" id="PTHR43808:SF31">
    <property type="entry name" value="N-ACETYL-L-CITRULLINE DEACETYLASE"/>
    <property type="match status" value="1"/>
</dbReference>
<dbReference type="Pfam" id="PF07687">
    <property type="entry name" value="M20_dimer"/>
    <property type="match status" value="1"/>
</dbReference>
<dbReference type="Pfam" id="PF01546">
    <property type="entry name" value="Peptidase_M20"/>
    <property type="match status" value="1"/>
</dbReference>
<dbReference type="SUPFAM" id="SSF55031">
    <property type="entry name" value="Bacterial exopeptidase dimerisation domain"/>
    <property type="match status" value="1"/>
</dbReference>
<dbReference type="SUPFAM" id="SSF53187">
    <property type="entry name" value="Zn-dependent exopeptidases"/>
    <property type="match status" value="1"/>
</dbReference>
<dbReference type="PROSITE" id="PS00759">
    <property type="entry name" value="ARGE_DAPE_CPG2_2"/>
    <property type="match status" value="1"/>
</dbReference>
<protein>
    <recommendedName>
        <fullName evidence="1">Succinyl-diaminopimelate desuccinylase</fullName>
        <shortName evidence="1">SDAP desuccinylase</shortName>
        <ecNumber evidence="1">3.5.1.18</ecNumber>
    </recommendedName>
    <alternativeName>
        <fullName evidence="1">N-succinyl-LL-2,6-diaminoheptanedioate amidohydrolase</fullName>
    </alternativeName>
</protein>
<organism>
    <name type="scientific">Shewanella putrefaciens (strain CN-32 / ATCC BAA-453)</name>
    <dbReference type="NCBI Taxonomy" id="319224"/>
    <lineage>
        <taxon>Bacteria</taxon>
        <taxon>Pseudomonadati</taxon>
        <taxon>Pseudomonadota</taxon>
        <taxon>Gammaproteobacteria</taxon>
        <taxon>Alteromonadales</taxon>
        <taxon>Shewanellaceae</taxon>
        <taxon>Shewanella</taxon>
    </lineage>
</organism>
<keyword id="KW-0028">Amino-acid biosynthesis</keyword>
<keyword id="KW-0170">Cobalt</keyword>
<keyword id="KW-0220">Diaminopimelate biosynthesis</keyword>
<keyword id="KW-0378">Hydrolase</keyword>
<keyword id="KW-0457">Lysine biosynthesis</keyword>
<keyword id="KW-0479">Metal-binding</keyword>
<keyword id="KW-0862">Zinc</keyword>
<accession>A4Y7B1</accession>
<gene>
    <name evidence="1" type="primary">dapE</name>
    <name type="ordered locus">Sputcn32_2123</name>
</gene>
<feature type="chain" id="PRO_0000375738" description="Succinyl-diaminopimelate desuccinylase">
    <location>
        <begin position="1"/>
        <end position="379"/>
    </location>
</feature>
<feature type="active site" evidence="1">
    <location>
        <position position="72"/>
    </location>
</feature>
<feature type="active site" description="Proton acceptor" evidence="1">
    <location>
        <position position="137"/>
    </location>
</feature>
<feature type="binding site" evidence="1">
    <location>
        <position position="70"/>
    </location>
    <ligand>
        <name>Zn(2+)</name>
        <dbReference type="ChEBI" id="CHEBI:29105"/>
        <label>1</label>
    </ligand>
</feature>
<feature type="binding site" evidence="1">
    <location>
        <position position="103"/>
    </location>
    <ligand>
        <name>Zn(2+)</name>
        <dbReference type="ChEBI" id="CHEBI:29105"/>
        <label>1</label>
    </ligand>
</feature>
<feature type="binding site" evidence="1">
    <location>
        <position position="103"/>
    </location>
    <ligand>
        <name>Zn(2+)</name>
        <dbReference type="ChEBI" id="CHEBI:29105"/>
        <label>2</label>
    </ligand>
</feature>
<feature type="binding site" evidence="1">
    <location>
        <position position="138"/>
    </location>
    <ligand>
        <name>Zn(2+)</name>
        <dbReference type="ChEBI" id="CHEBI:29105"/>
        <label>2</label>
    </ligand>
</feature>
<feature type="binding site" evidence="1">
    <location>
        <position position="166"/>
    </location>
    <ligand>
        <name>Zn(2+)</name>
        <dbReference type="ChEBI" id="CHEBI:29105"/>
        <label>1</label>
    </ligand>
</feature>
<feature type="binding site" evidence="1">
    <location>
        <position position="352"/>
    </location>
    <ligand>
        <name>Zn(2+)</name>
        <dbReference type="ChEBI" id="CHEBI:29105"/>
        <label>2</label>
    </ligand>
</feature>
<name>DAPE_SHEPC</name>